<name>RL31_AEDAE</name>
<gene>
    <name type="primary">RpL31</name>
    <name type="ORF">AAEL006698</name>
</gene>
<protein>
    <recommendedName>
        <fullName evidence="1">Large ribosomal subunit protein eL31</fullName>
    </recommendedName>
    <alternativeName>
        <fullName>60S ribosomal protein L31</fullName>
    </alternativeName>
</protein>
<evidence type="ECO:0000305" key="1"/>
<organism>
    <name type="scientific">Aedes aegypti</name>
    <name type="common">Yellowfever mosquito</name>
    <name type="synonym">Culex aegypti</name>
    <dbReference type="NCBI Taxonomy" id="7159"/>
    <lineage>
        <taxon>Eukaryota</taxon>
        <taxon>Metazoa</taxon>
        <taxon>Ecdysozoa</taxon>
        <taxon>Arthropoda</taxon>
        <taxon>Hexapoda</taxon>
        <taxon>Insecta</taxon>
        <taxon>Pterygota</taxon>
        <taxon>Neoptera</taxon>
        <taxon>Endopterygota</taxon>
        <taxon>Diptera</taxon>
        <taxon>Nematocera</taxon>
        <taxon>Culicoidea</taxon>
        <taxon>Culicidae</taxon>
        <taxon>Culicinae</taxon>
        <taxon>Aedini</taxon>
        <taxon>Aedes</taxon>
        <taxon>Stegomyia</taxon>
    </lineage>
</organism>
<keyword id="KW-1185">Reference proteome</keyword>
<keyword id="KW-0687">Ribonucleoprotein</keyword>
<keyword id="KW-0689">Ribosomal protein</keyword>
<proteinExistence type="evidence at transcript level"/>
<feature type="chain" id="PRO_0000153770" description="Large ribosomal subunit protein eL31">
    <location>
        <begin position="1"/>
        <end position="124"/>
    </location>
</feature>
<dbReference type="EMBL" id="AF324863">
    <property type="protein sequence ID" value="AAG40333.1"/>
    <property type="molecule type" value="mRNA"/>
</dbReference>
<dbReference type="EMBL" id="AY009157">
    <property type="protein sequence ID" value="AAG35194.1"/>
    <property type="molecule type" value="mRNA"/>
</dbReference>
<dbReference type="EMBL" id="CH477402">
    <property type="protein sequence ID" value="EAT41684.1"/>
    <property type="molecule type" value="Genomic_DNA"/>
</dbReference>
<dbReference type="SMR" id="Q9GN74"/>
<dbReference type="FunCoup" id="Q9GN74">
    <property type="interactions" value="1258"/>
</dbReference>
<dbReference type="STRING" id="7159.Q9GN74"/>
<dbReference type="PaxDb" id="7159-AAEL006698-PA"/>
<dbReference type="EnsemblMetazoa" id="AAEL006698-RA">
    <property type="protein sequence ID" value="AAEL006698-PA"/>
    <property type="gene ID" value="AAEL006698"/>
</dbReference>
<dbReference type="GeneID" id="5568260"/>
<dbReference type="KEGG" id="aag:5568260"/>
<dbReference type="CTD" id="6160"/>
<dbReference type="VEuPathDB" id="VectorBase:AAEL006698"/>
<dbReference type="eggNOG" id="KOG0893">
    <property type="taxonomic scope" value="Eukaryota"/>
</dbReference>
<dbReference type="HOGENOM" id="CLU_112570_1_1_1"/>
<dbReference type="InParanoid" id="Q9GN74"/>
<dbReference type="OMA" id="EVWKQGI"/>
<dbReference type="OrthoDB" id="9739313at2759"/>
<dbReference type="PhylomeDB" id="Q9GN74"/>
<dbReference type="Proteomes" id="UP000008820">
    <property type="component" value="Chromosome 3"/>
</dbReference>
<dbReference type="Proteomes" id="UP000682892">
    <property type="component" value="Chromosome 3"/>
</dbReference>
<dbReference type="GO" id="GO:0022625">
    <property type="term" value="C:cytosolic large ribosomal subunit"/>
    <property type="evidence" value="ECO:0007669"/>
    <property type="project" value="TreeGrafter"/>
</dbReference>
<dbReference type="GO" id="GO:0003735">
    <property type="term" value="F:structural constituent of ribosome"/>
    <property type="evidence" value="ECO:0007669"/>
    <property type="project" value="InterPro"/>
</dbReference>
<dbReference type="GO" id="GO:0002181">
    <property type="term" value="P:cytoplasmic translation"/>
    <property type="evidence" value="ECO:0007669"/>
    <property type="project" value="TreeGrafter"/>
</dbReference>
<dbReference type="CDD" id="cd00463">
    <property type="entry name" value="Ribosomal_L31e"/>
    <property type="match status" value="1"/>
</dbReference>
<dbReference type="FunFam" id="3.10.440.10:FF:000001">
    <property type="entry name" value="60S ribosomal protein L31"/>
    <property type="match status" value="1"/>
</dbReference>
<dbReference type="Gene3D" id="3.10.440.10">
    <property type="match status" value="1"/>
</dbReference>
<dbReference type="HAMAP" id="MF_00410">
    <property type="entry name" value="Ribosomal_eL31"/>
    <property type="match status" value="1"/>
</dbReference>
<dbReference type="InterPro" id="IPR000054">
    <property type="entry name" value="Ribosomal_eL31"/>
</dbReference>
<dbReference type="InterPro" id="IPR020052">
    <property type="entry name" value="Ribosomal_eL31_CS"/>
</dbReference>
<dbReference type="InterPro" id="IPR023621">
    <property type="entry name" value="Ribosomal_eL31_dom_sf"/>
</dbReference>
<dbReference type="NCBIfam" id="NF002258">
    <property type="entry name" value="PRK01192.1-1"/>
    <property type="match status" value="1"/>
</dbReference>
<dbReference type="PANTHER" id="PTHR10956">
    <property type="entry name" value="60S RIBOSOMAL PROTEIN L31"/>
    <property type="match status" value="1"/>
</dbReference>
<dbReference type="PANTHER" id="PTHR10956:SF0">
    <property type="entry name" value="60S RIBOSOMAL PROTEIN L31"/>
    <property type="match status" value="1"/>
</dbReference>
<dbReference type="Pfam" id="PF01198">
    <property type="entry name" value="Ribosomal_L31e"/>
    <property type="match status" value="1"/>
</dbReference>
<dbReference type="SMART" id="SM01380">
    <property type="entry name" value="Ribosomal_L31e"/>
    <property type="match status" value="1"/>
</dbReference>
<dbReference type="SUPFAM" id="SSF54575">
    <property type="entry name" value="Ribosomal protein L31e"/>
    <property type="match status" value="1"/>
</dbReference>
<dbReference type="PROSITE" id="PS01144">
    <property type="entry name" value="RIBOSOMAL_L31E"/>
    <property type="match status" value="1"/>
</dbReference>
<sequence>MAKTKTEKKAKSAINEVVTRECTINLNRRLHKVGYKKRAPRAVKIVRKFAEKEMGTNDVRIDTRLNKALWHRGIRNPPFRIRVRLSRRRNDDEDSPNKLYTLVTYVPVSTFKELQTENVESTED</sequence>
<accession>Q9GN74</accession>
<accession>Q175D7</accession>
<comment type="similarity">
    <text evidence="1">Belongs to the eukaryotic ribosomal protein eL31 family.</text>
</comment>
<reference key="1">
    <citation type="submission" date="2000-11" db="EMBL/GenBank/DDBJ databases">
        <authorList>
            <person name="Morlais I."/>
            <person name="Severson D.W."/>
        </authorList>
    </citation>
    <scope>NUCLEOTIDE SEQUENCE [MRNA]</scope>
    <source>
        <strain>Moyo-R</strain>
        <strain>Red eye</strain>
        <tissue>Midgut</tissue>
    </source>
</reference>
<reference key="2">
    <citation type="journal article" date="2007" name="Science">
        <title>Genome sequence of Aedes aegypti, a major arbovirus vector.</title>
        <authorList>
            <person name="Nene V."/>
            <person name="Wortman J.R."/>
            <person name="Lawson D."/>
            <person name="Haas B.J."/>
            <person name="Kodira C.D."/>
            <person name="Tu Z.J."/>
            <person name="Loftus B.J."/>
            <person name="Xi Z."/>
            <person name="Megy K."/>
            <person name="Grabherr M."/>
            <person name="Ren Q."/>
            <person name="Zdobnov E.M."/>
            <person name="Lobo N.F."/>
            <person name="Campbell K.S."/>
            <person name="Brown S.E."/>
            <person name="Bonaldo M.F."/>
            <person name="Zhu J."/>
            <person name="Sinkins S.P."/>
            <person name="Hogenkamp D.G."/>
            <person name="Amedeo P."/>
            <person name="Arensburger P."/>
            <person name="Atkinson P.W."/>
            <person name="Bidwell S.L."/>
            <person name="Biedler J."/>
            <person name="Birney E."/>
            <person name="Bruggner R.V."/>
            <person name="Costas J."/>
            <person name="Coy M.R."/>
            <person name="Crabtree J."/>
            <person name="Crawford M."/>
            <person name="DeBruyn B."/>
            <person name="DeCaprio D."/>
            <person name="Eiglmeier K."/>
            <person name="Eisenstadt E."/>
            <person name="El-Dorry H."/>
            <person name="Gelbart W.M."/>
            <person name="Gomes S.L."/>
            <person name="Hammond M."/>
            <person name="Hannick L.I."/>
            <person name="Hogan J.R."/>
            <person name="Holmes M.H."/>
            <person name="Jaffe D."/>
            <person name="Johnston S.J."/>
            <person name="Kennedy R.C."/>
            <person name="Koo H."/>
            <person name="Kravitz S."/>
            <person name="Kriventseva E.V."/>
            <person name="Kulp D."/>
            <person name="Labutti K."/>
            <person name="Lee E."/>
            <person name="Li S."/>
            <person name="Lovin D.D."/>
            <person name="Mao C."/>
            <person name="Mauceli E."/>
            <person name="Menck C.F."/>
            <person name="Miller J.R."/>
            <person name="Montgomery P."/>
            <person name="Mori A."/>
            <person name="Nascimento A.L."/>
            <person name="Naveira H.F."/>
            <person name="Nusbaum C."/>
            <person name="O'Leary S.B."/>
            <person name="Orvis J."/>
            <person name="Pertea M."/>
            <person name="Quesneville H."/>
            <person name="Reidenbach K.R."/>
            <person name="Rogers Y.-H.C."/>
            <person name="Roth C.W."/>
            <person name="Schneider J.R."/>
            <person name="Schatz M."/>
            <person name="Shumway M."/>
            <person name="Stanke M."/>
            <person name="Stinson E.O."/>
            <person name="Tubio J.M.C."/>
            <person name="Vanzee J.P."/>
            <person name="Verjovski-Almeida S."/>
            <person name="Werner D."/>
            <person name="White O.R."/>
            <person name="Wyder S."/>
            <person name="Zeng Q."/>
            <person name="Zhao Q."/>
            <person name="Zhao Y."/>
            <person name="Hill C.A."/>
            <person name="Raikhel A.S."/>
            <person name="Soares M.B."/>
            <person name="Knudson D.L."/>
            <person name="Lee N.H."/>
            <person name="Galagan J."/>
            <person name="Salzberg S.L."/>
            <person name="Paulsen I.T."/>
            <person name="Dimopoulos G."/>
            <person name="Collins F.H."/>
            <person name="Bruce B."/>
            <person name="Fraser-Liggett C.M."/>
            <person name="Severson D.W."/>
        </authorList>
    </citation>
    <scope>NUCLEOTIDE SEQUENCE [LARGE SCALE GENOMIC DNA]</scope>
    <source>
        <strain>LVPib12</strain>
    </source>
</reference>